<evidence type="ECO:0000255" key="1">
    <source>
        <dbReference type="HAMAP-Rule" id="MF_00693"/>
    </source>
</evidence>
<proteinExistence type="inferred from homology"/>
<name>Y4544_PSEP7</name>
<accession>A6VA08</accession>
<feature type="chain" id="PRO_1000062040" description="Probable transcriptional regulatory protein PSPA7_4544">
    <location>
        <begin position="1"/>
        <end position="248"/>
    </location>
</feature>
<reference key="1">
    <citation type="submission" date="2007-06" db="EMBL/GenBank/DDBJ databases">
        <authorList>
            <person name="Dodson R.J."/>
            <person name="Harkins D."/>
            <person name="Paulsen I.T."/>
        </authorList>
    </citation>
    <scope>NUCLEOTIDE SEQUENCE [LARGE SCALE GENOMIC DNA]</scope>
    <source>
        <strain>DSM 24068 / PA7</strain>
    </source>
</reference>
<protein>
    <recommendedName>
        <fullName evidence="1">Probable transcriptional regulatory protein PSPA7_4544</fullName>
    </recommendedName>
</protein>
<comment type="subcellular location">
    <subcellularLocation>
        <location evidence="1">Cytoplasm</location>
    </subcellularLocation>
</comment>
<comment type="similarity">
    <text evidence="1">Belongs to the TACO1 family.</text>
</comment>
<organism>
    <name type="scientific">Pseudomonas paraeruginosa (strain DSM 24068 / PA7)</name>
    <name type="common">Pseudomonas aeruginosa (strain PA7)</name>
    <dbReference type="NCBI Taxonomy" id="381754"/>
    <lineage>
        <taxon>Bacteria</taxon>
        <taxon>Pseudomonadati</taxon>
        <taxon>Pseudomonadota</taxon>
        <taxon>Gammaproteobacteria</taxon>
        <taxon>Pseudomonadales</taxon>
        <taxon>Pseudomonadaceae</taxon>
        <taxon>Pseudomonas</taxon>
        <taxon>Pseudomonas paraeruginosa</taxon>
    </lineage>
</organism>
<dbReference type="EMBL" id="CP000744">
    <property type="protein sequence ID" value="ABR83053.1"/>
    <property type="molecule type" value="Genomic_DNA"/>
</dbReference>
<dbReference type="RefSeq" id="WP_003155979.1">
    <property type="nucleotide sequence ID" value="NC_009656.1"/>
</dbReference>
<dbReference type="SMR" id="A6VA08"/>
<dbReference type="GeneID" id="77222453"/>
<dbReference type="KEGG" id="pap:PSPA7_4544"/>
<dbReference type="HOGENOM" id="CLU_062974_2_2_6"/>
<dbReference type="Proteomes" id="UP000001582">
    <property type="component" value="Chromosome"/>
</dbReference>
<dbReference type="GO" id="GO:0005829">
    <property type="term" value="C:cytosol"/>
    <property type="evidence" value="ECO:0007669"/>
    <property type="project" value="TreeGrafter"/>
</dbReference>
<dbReference type="GO" id="GO:0003677">
    <property type="term" value="F:DNA binding"/>
    <property type="evidence" value="ECO:0007669"/>
    <property type="project" value="UniProtKB-UniRule"/>
</dbReference>
<dbReference type="GO" id="GO:0006355">
    <property type="term" value="P:regulation of DNA-templated transcription"/>
    <property type="evidence" value="ECO:0007669"/>
    <property type="project" value="UniProtKB-UniRule"/>
</dbReference>
<dbReference type="FunFam" id="1.10.10.200:FF:000001">
    <property type="entry name" value="Probable transcriptional regulatory protein YebC"/>
    <property type="match status" value="1"/>
</dbReference>
<dbReference type="FunFam" id="3.30.70.980:FF:000002">
    <property type="entry name" value="Probable transcriptional regulatory protein YebC"/>
    <property type="match status" value="1"/>
</dbReference>
<dbReference type="Gene3D" id="1.10.10.200">
    <property type="match status" value="1"/>
</dbReference>
<dbReference type="Gene3D" id="3.30.70.980">
    <property type="match status" value="2"/>
</dbReference>
<dbReference type="HAMAP" id="MF_00693">
    <property type="entry name" value="Transcrip_reg_TACO1"/>
    <property type="match status" value="1"/>
</dbReference>
<dbReference type="InterPro" id="IPR017856">
    <property type="entry name" value="Integrase-like_N"/>
</dbReference>
<dbReference type="InterPro" id="IPR048300">
    <property type="entry name" value="TACO1_YebC-like_2nd/3rd_dom"/>
</dbReference>
<dbReference type="InterPro" id="IPR049083">
    <property type="entry name" value="TACO1_YebC_N"/>
</dbReference>
<dbReference type="InterPro" id="IPR002876">
    <property type="entry name" value="Transcrip_reg_TACO1-like"/>
</dbReference>
<dbReference type="InterPro" id="IPR026564">
    <property type="entry name" value="Transcrip_reg_TACO1-like_dom3"/>
</dbReference>
<dbReference type="InterPro" id="IPR029072">
    <property type="entry name" value="YebC-like"/>
</dbReference>
<dbReference type="NCBIfam" id="NF001030">
    <property type="entry name" value="PRK00110.1"/>
    <property type="match status" value="1"/>
</dbReference>
<dbReference type="NCBIfam" id="NF009044">
    <property type="entry name" value="PRK12378.1"/>
    <property type="match status" value="1"/>
</dbReference>
<dbReference type="NCBIfam" id="TIGR01033">
    <property type="entry name" value="YebC/PmpR family DNA-binding transcriptional regulator"/>
    <property type="match status" value="1"/>
</dbReference>
<dbReference type="PANTHER" id="PTHR12532:SF6">
    <property type="entry name" value="TRANSCRIPTIONAL REGULATORY PROTEIN YEBC-RELATED"/>
    <property type="match status" value="1"/>
</dbReference>
<dbReference type="PANTHER" id="PTHR12532">
    <property type="entry name" value="TRANSLATIONAL ACTIVATOR OF CYTOCHROME C OXIDASE 1"/>
    <property type="match status" value="1"/>
</dbReference>
<dbReference type="Pfam" id="PF20772">
    <property type="entry name" value="TACO1_YebC_N"/>
    <property type="match status" value="1"/>
</dbReference>
<dbReference type="Pfam" id="PF01709">
    <property type="entry name" value="Transcrip_reg"/>
    <property type="match status" value="1"/>
</dbReference>
<dbReference type="SUPFAM" id="SSF75625">
    <property type="entry name" value="YebC-like"/>
    <property type="match status" value="1"/>
</dbReference>
<sequence>MAGHSKWANIKHRKERQDAKKGKIFTKLIRELTVAAKQGGGVPADNPRLRLAVDKALTANMTRDTIDRAIARGVGSNDADNMVELSYEGYAPSGVAIIVEAMTDNRNRTAAEVRHAFSKCGGNLGTDGSVAYMFERKGQISFAPGVDEEALMDAALEAGADDVVVNDDGSIDVFTTFADFISVNEALTAAGFKGDEAEVTMIPSTTATLDLETAQKVLKLIDMLEDLDDVQNVYSNADIPDDVMAQLG</sequence>
<keyword id="KW-0963">Cytoplasm</keyword>
<keyword id="KW-0238">DNA-binding</keyword>
<keyword id="KW-0804">Transcription</keyword>
<keyword id="KW-0805">Transcription regulation</keyword>
<gene>
    <name type="ordered locus">PSPA7_4544</name>
</gene>